<organism>
    <name type="scientific">Pongo abelii</name>
    <name type="common">Sumatran orangutan</name>
    <name type="synonym">Pongo pygmaeus abelii</name>
    <dbReference type="NCBI Taxonomy" id="9601"/>
    <lineage>
        <taxon>Eukaryota</taxon>
        <taxon>Metazoa</taxon>
        <taxon>Chordata</taxon>
        <taxon>Craniata</taxon>
        <taxon>Vertebrata</taxon>
        <taxon>Euteleostomi</taxon>
        <taxon>Mammalia</taxon>
        <taxon>Eutheria</taxon>
        <taxon>Euarchontoglires</taxon>
        <taxon>Primates</taxon>
        <taxon>Haplorrhini</taxon>
        <taxon>Catarrhini</taxon>
        <taxon>Hominidae</taxon>
        <taxon>Pongo</taxon>
    </lineage>
</organism>
<name>RAD1_PONAB</name>
<feature type="chain" id="PRO_0000225007" description="Cell cycle checkpoint protein RAD1">
    <location>
        <begin position="1"/>
        <end position="282"/>
    </location>
</feature>
<proteinExistence type="evidence at transcript level"/>
<evidence type="ECO:0000250" key="1">
    <source>
        <dbReference type="UniProtKB" id="O60671"/>
    </source>
</evidence>
<evidence type="ECO:0000305" key="2"/>
<reference key="1">
    <citation type="submission" date="2004-11" db="EMBL/GenBank/DDBJ databases">
        <authorList>
            <consortium name="The German cDNA consortium"/>
        </authorList>
    </citation>
    <scope>NUCLEOTIDE SEQUENCE [LARGE SCALE MRNA]</scope>
    <source>
        <tissue>Brain cortex</tissue>
    </source>
</reference>
<protein>
    <recommendedName>
        <fullName>Cell cycle checkpoint protein RAD1</fullName>
    </recommendedName>
</protein>
<comment type="function">
    <text evidence="1">Component of the 9-1-1 cell-cycle checkpoint response complex that plays a major role in DNA repair. The 9-1-1 complex is recruited to DNA lesion upon damage by the RAD17-replication factor C (RFC) clamp loader complex. Acts then as a sliding clamp platform on DNA for several proteins involved in long-patch base excision repair (LP-BER). The 9-1-1 complex stimulates DNA polymerase beta (POLB) activity by increasing its affinity for the 3'-OH end of the primer-template and stabilizes POLB to those sites where LP-BER proceeds; endonuclease FEN1 cleavage activity on substrates with double, nick, or gap flaps of distinct sequences and lengths; and DNA ligase I (LIG1) on long-patch base excision repair substrates. The 9-1-1 complex is necessary for the recruitment of RHNO1 to sites of double-stranded breaks (DSB) occurring during the S phase.</text>
</comment>
<comment type="subunit">
    <text evidence="1">Component of the toroidal 9-1-1 (RAD9-RAD1-HUS1) complex, composed of RAD9A, RAD1 and HUS1. The 9-1-1 complex associates with LIG1, POLB, FEN1, RAD17, HDAC1, RPA1 and RPA2. The 9-1-1 complex associates with the RAD17-RFC complex. RAD1 interacts with POLB, FEN1, HUS1, HUS1B, RAD9A and RAD9B. Interacts with DNAJC7. Interacts with RHNO1; interaction is direct.</text>
</comment>
<comment type="subcellular location">
    <subcellularLocation>
        <location evidence="1">Nucleus</location>
    </subcellularLocation>
</comment>
<comment type="similarity">
    <text evidence="2">Belongs to the rad1 family.</text>
</comment>
<dbReference type="EMBL" id="CR859979">
    <property type="protein sequence ID" value="CAH92131.1"/>
    <property type="molecule type" value="mRNA"/>
</dbReference>
<dbReference type="RefSeq" id="NP_001126246.1">
    <property type="nucleotide sequence ID" value="NM_001132774.1"/>
</dbReference>
<dbReference type="RefSeq" id="XP_009238895.1">
    <property type="nucleotide sequence ID" value="XM_009240620.1"/>
</dbReference>
<dbReference type="SMR" id="Q5R7X9"/>
<dbReference type="FunCoup" id="Q5R7X9">
    <property type="interactions" value="3977"/>
</dbReference>
<dbReference type="STRING" id="9601.ENSPPYP00000017189"/>
<dbReference type="Ensembl" id="ENSPPYT00000053099.1">
    <property type="protein sequence ID" value="ENSPPYP00000027894.1"/>
    <property type="gene ID" value="ENSPPYG00000031706.1"/>
</dbReference>
<dbReference type="GeneID" id="100173217"/>
<dbReference type="KEGG" id="pon:100173217"/>
<dbReference type="CTD" id="5810"/>
<dbReference type="eggNOG" id="KOG3194">
    <property type="taxonomic scope" value="Eukaryota"/>
</dbReference>
<dbReference type="GeneTree" id="ENSGT00500000044913"/>
<dbReference type="HOGENOM" id="CLU_035332_2_1_1"/>
<dbReference type="InParanoid" id="Q5R7X9"/>
<dbReference type="OMA" id="WSQAYKF"/>
<dbReference type="OrthoDB" id="337581at2759"/>
<dbReference type="TreeFam" id="TF101211"/>
<dbReference type="Proteomes" id="UP000001595">
    <property type="component" value="Chromosome 5"/>
</dbReference>
<dbReference type="GO" id="GO:0030896">
    <property type="term" value="C:checkpoint clamp complex"/>
    <property type="evidence" value="ECO:0007669"/>
    <property type="project" value="Ensembl"/>
</dbReference>
<dbReference type="GO" id="GO:0005654">
    <property type="term" value="C:nucleoplasm"/>
    <property type="evidence" value="ECO:0007669"/>
    <property type="project" value="Ensembl"/>
</dbReference>
<dbReference type="GO" id="GO:0008311">
    <property type="term" value="F:double-stranded DNA 3'-5' DNA exonuclease activity"/>
    <property type="evidence" value="ECO:0007669"/>
    <property type="project" value="UniProtKB-EC"/>
</dbReference>
<dbReference type="GO" id="GO:0071479">
    <property type="term" value="P:cellular response to ionizing radiation"/>
    <property type="evidence" value="ECO:0007669"/>
    <property type="project" value="Ensembl"/>
</dbReference>
<dbReference type="GO" id="GO:0000077">
    <property type="term" value="P:DNA damage checkpoint signaling"/>
    <property type="evidence" value="ECO:0007669"/>
    <property type="project" value="Ensembl"/>
</dbReference>
<dbReference type="GO" id="GO:0006281">
    <property type="term" value="P:DNA repair"/>
    <property type="evidence" value="ECO:0007669"/>
    <property type="project" value="UniProtKB-KW"/>
</dbReference>
<dbReference type="GO" id="GO:0051598">
    <property type="term" value="P:meiotic recombination checkpoint signaling"/>
    <property type="evidence" value="ECO:0007669"/>
    <property type="project" value="Ensembl"/>
</dbReference>
<dbReference type="CDD" id="cd00577">
    <property type="entry name" value="PCNA"/>
    <property type="match status" value="1"/>
</dbReference>
<dbReference type="FunFam" id="3.70.10.10:FF:000004">
    <property type="entry name" value="Cell cycle checkpoint protein RAD1"/>
    <property type="match status" value="1"/>
</dbReference>
<dbReference type="Gene3D" id="3.70.10.10">
    <property type="match status" value="1"/>
</dbReference>
<dbReference type="InterPro" id="IPR003011">
    <property type="entry name" value="Cell_cycle_checkpoint_Rad1"/>
</dbReference>
<dbReference type="InterPro" id="IPR046938">
    <property type="entry name" value="DNA_clamp_sf"/>
</dbReference>
<dbReference type="InterPro" id="IPR003021">
    <property type="entry name" value="Rad1_Rec1_Rad17"/>
</dbReference>
<dbReference type="PANTHER" id="PTHR10870">
    <property type="entry name" value="CELL CYCLE CHECKPOINT PROTEIN RAD1"/>
    <property type="match status" value="1"/>
</dbReference>
<dbReference type="PANTHER" id="PTHR10870:SF0">
    <property type="entry name" value="CELL CYCLE CHECKPOINT PROTEIN RAD1"/>
    <property type="match status" value="1"/>
</dbReference>
<dbReference type="Pfam" id="PF02144">
    <property type="entry name" value="Rad1"/>
    <property type="match status" value="1"/>
</dbReference>
<dbReference type="PRINTS" id="PR01245">
    <property type="entry name" value="RAD1REC1"/>
</dbReference>
<dbReference type="PRINTS" id="PR01246">
    <property type="entry name" value="RAD1REPAIR"/>
</dbReference>
<dbReference type="SUPFAM" id="SSF55979">
    <property type="entry name" value="DNA clamp"/>
    <property type="match status" value="1"/>
</dbReference>
<keyword id="KW-0227">DNA damage</keyword>
<keyword id="KW-0234">DNA repair</keyword>
<keyword id="KW-0539">Nucleus</keyword>
<keyword id="KW-1185">Reference proteome</keyword>
<sequence>MPLLTQQIQDEDDQYSLVASLDNVRNLSTILKAIHFREHATCFATKNGIKVTVENAKCVQANAFIQAGIFQEFKVQEESVTFRINLTVLLDCLSIFGSSPMPGTLTALRMCYQGYGYPLMLFLEEGGVVTVCKINTQEPEETLDFDFCSTNVINKIILQSEGLREAFSELDMTSEVLQITMSPDKPYFRLSTFGNAGSSHLDYPKDSDLMEAFHCNQTQVNRYKISLLKPSTKALVLSCKVSIRTDNRGFLSLQYMIRNEDGQICFVEYYCCPDEEVPESES</sequence>
<gene>
    <name type="primary">RAD1</name>
</gene>
<accession>Q5R7X9</accession>